<name>Y1053_HAEIN</name>
<feature type="chain" id="PRO_0000077997" description="Uncharacterized protein HI_1053">
    <location>
        <begin position="1"/>
        <end position="113"/>
    </location>
</feature>
<reference key="1">
    <citation type="journal article" date="1995" name="Science">
        <title>Whole-genome random sequencing and assembly of Haemophilus influenzae Rd.</title>
        <authorList>
            <person name="Fleischmann R.D."/>
            <person name="Adams M.D."/>
            <person name="White O."/>
            <person name="Clayton R.A."/>
            <person name="Kirkness E.F."/>
            <person name="Kerlavage A.R."/>
            <person name="Bult C.J."/>
            <person name="Tomb J.-F."/>
            <person name="Dougherty B.A."/>
            <person name="Merrick J.M."/>
            <person name="McKenney K."/>
            <person name="Sutton G.G."/>
            <person name="FitzHugh W."/>
            <person name="Fields C.A."/>
            <person name="Gocayne J.D."/>
            <person name="Scott J.D."/>
            <person name="Shirley R."/>
            <person name="Liu L.-I."/>
            <person name="Glodek A."/>
            <person name="Kelley J.M."/>
            <person name="Weidman J.F."/>
            <person name="Phillips C.A."/>
            <person name="Spriggs T."/>
            <person name="Hedblom E."/>
            <person name="Cotton M.D."/>
            <person name="Utterback T.R."/>
            <person name="Hanna M.C."/>
            <person name="Nguyen D.T."/>
            <person name="Saudek D.M."/>
            <person name="Brandon R.C."/>
            <person name="Fine L.D."/>
            <person name="Fritchman J.L."/>
            <person name="Fuhrmann J.L."/>
            <person name="Geoghagen N.S.M."/>
            <person name="Gnehm C.L."/>
            <person name="McDonald L.A."/>
            <person name="Small K.V."/>
            <person name="Fraser C.M."/>
            <person name="Smith H.O."/>
            <person name="Venter J.C."/>
        </authorList>
    </citation>
    <scope>NUCLEOTIDE SEQUENCE [LARGE SCALE GENOMIC DNA]</scope>
    <source>
        <strain>ATCC 51907 / DSM 11121 / KW20 / Rd</strain>
    </source>
</reference>
<organism>
    <name type="scientific">Haemophilus influenzae (strain ATCC 51907 / DSM 11121 / KW20 / Rd)</name>
    <dbReference type="NCBI Taxonomy" id="71421"/>
    <lineage>
        <taxon>Bacteria</taxon>
        <taxon>Pseudomonadati</taxon>
        <taxon>Pseudomonadota</taxon>
        <taxon>Gammaproteobacteria</taxon>
        <taxon>Pasteurellales</taxon>
        <taxon>Pasteurellaceae</taxon>
        <taxon>Haemophilus</taxon>
    </lineage>
</organism>
<protein>
    <recommendedName>
        <fullName>Uncharacterized protein HI_1053</fullName>
    </recommendedName>
</protein>
<sequence>MFTDWKEHTSHVKKSFGELGKQYPKMLQAYQALGAAAAEGNVLDAKTRELIALAVAVTTRCESCISAHAEEAVKAGASEAEVAAALATAIALNAGAAYTYSLRALEAYSVQKA</sequence>
<proteinExistence type="predicted"/>
<gene>
    <name type="ordered locus">HI_1053</name>
</gene>
<dbReference type="EMBL" id="L42023">
    <property type="protein sequence ID" value="AAC22712.1"/>
    <property type="molecule type" value="Genomic_DNA"/>
</dbReference>
<dbReference type="PIR" id="E64165">
    <property type="entry name" value="E64165"/>
</dbReference>
<dbReference type="RefSeq" id="NP_439212.1">
    <property type="nucleotide sequence ID" value="NC_000907.1"/>
</dbReference>
<dbReference type="SMR" id="Q57498"/>
<dbReference type="STRING" id="71421.HI_1053"/>
<dbReference type="EnsemblBacteria" id="AAC22712">
    <property type="protein sequence ID" value="AAC22712"/>
    <property type="gene ID" value="HI_1053"/>
</dbReference>
<dbReference type="KEGG" id="hin:HI_1053"/>
<dbReference type="PATRIC" id="fig|71421.8.peg.1098"/>
<dbReference type="eggNOG" id="COG0599">
    <property type="taxonomic scope" value="Bacteria"/>
</dbReference>
<dbReference type="HOGENOM" id="CLU_137228_2_1_6"/>
<dbReference type="OrthoDB" id="1683318at2"/>
<dbReference type="PhylomeDB" id="Q57498"/>
<dbReference type="BioCyc" id="HINF71421:G1GJ1-1092-MONOMER"/>
<dbReference type="Proteomes" id="UP000000579">
    <property type="component" value="Chromosome"/>
</dbReference>
<dbReference type="GO" id="GO:0016491">
    <property type="term" value="F:oxidoreductase activity"/>
    <property type="evidence" value="ECO:0000318"/>
    <property type="project" value="GO_Central"/>
</dbReference>
<dbReference type="GO" id="GO:0051920">
    <property type="term" value="F:peroxiredoxin activity"/>
    <property type="evidence" value="ECO:0007669"/>
    <property type="project" value="InterPro"/>
</dbReference>
<dbReference type="Gene3D" id="1.20.1290.10">
    <property type="entry name" value="AhpD-like"/>
    <property type="match status" value="1"/>
</dbReference>
<dbReference type="InterPro" id="IPR029032">
    <property type="entry name" value="AhpD-like"/>
</dbReference>
<dbReference type="InterPro" id="IPR004675">
    <property type="entry name" value="AhpD_core"/>
</dbReference>
<dbReference type="InterPro" id="IPR003779">
    <property type="entry name" value="CMD-like"/>
</dbReference>
<dbReference type="NCBIfam" id="TIGR00778">
    <property type="entry name" value="ahpD_dom"/>
    <property type="match status" value="1"/>
</dbReference>
<dbReference type="PANTHER" id="PTHR33930">
    <property type="entry name" value="ALKYL HYDROPEROXIDE REDUCTASE AHPD"/>
    <property type="match status" value="1"/>
</dbReference>
<dbReference type="PANTHER" id="PTHR33930:SF2">
    <property type="entry name" value="BLR3452 PROTEIN"/>
    <property type="match status" value="1"/>
</dbReference>
<dbReference type="Pfam" id="PF02627">
    <property type="entry name" value="CMD"/>
    <property type="match status" value="1"/>
</dbReference>
<dbReference type="SUPFAM" id="SSF69118">
    <property type="entry name" value="AhpD-like"/>
    <property type="match status" value="1"/>
</dbReference>
<accession>Q57498</accession>
<keyword id="KW-1185">Reference proteome</keyword>